<comment type="similarity">
    <text evidence="1">Belongs to the bacterial ribosomal protein bL36 family.</text>
</comment>
<feature type="chain" id="PRO_1000101039" description="Large ribosomal subunit protein bL36">
    <location>
        <begin position="1"/>
        <end position="37"/>
    </location>
</feature>
<sequence>MKVSASVKKICRNCKIIRRKGVVRVICTDPRHKQRQG</sequence>
<accession>B1Y8B5</accession>
<reference key="1">
    <citation type="submission" date="2008-03" db="EMBL/GenBank/DDBJ databases">
        <title>Complete sequence of Leptothrix cholodnii SP-6.</title>
        <authorList>
            <consortium name="US DOE Joint Genome Institute"/>
            <person name="Copeland A."/>
            <person name="Lucas S."/>
            <person name="Lapidus A."/>
            <person name="Glavina del Rio T."/>
            <person name="Dalin E."/>
            <person name="Tice H."/>
            <person name="Bruce D."/>
            <person name="Goodwin L."/>
            <person name="Pitluck S."/>
            <person name="Chertkov O."/>
            <person name="Brettin T."/>
            <person name="Detter J.C."/>
            <person name="Han C."/>
            <person name="Kuske C.R."/>
            <person name="Schmutz J."/>
            <person name="Larimer F."/>
            <person name="Land M."/>
            <person name="Hauser L."/>
            <person name="Kyrpides N."/>
            <person name="Lykidis A."/>
            <person name="Emerson D."/>
            <person name="Richardson P."/>
        </authorList>
    </citation>
    <scope>NUCLEOTIDE SEQUENCE [LARGE SCALE GENOMIC DNA]</scope>
    <source>
        <strain>ATCC 51168 / LMG 8142 / SP-6</strain>
    </source>
</reference>
<keyword id="KW-1185">Reference proteome</keyword>
<keyword id="KW-0687">Ribonucleoprotein</keyword>
<keyword id="KW-0689">Ribosomal protein</keyword>
<organism>
    <name type="scientific">Leptothrix cholodnii (strain ATCC 51168 / LMG 8142 / SP-6)</name>
    <name type="common">Leptothrix discophora (strain SP-6)</name>
    <dbReference type="NCBI Taxonomy" id="395495"/>
    <lineage>
        <taxon>Bacteria</taxon>
        <taxon>Pseudomonadati</taxon>
        <taxon>Pseudomonadota</taxon>
        <taxon>Betaproteobacteria</taxon>
        <taxon>Burkholderiales</taxon>
        <taxon>Sphaerotilaceae</taxon>
        <taxon>Leptothrix</taxon>
    </lineage>
</organism>
<dbReference type="EMBL" id="CP001013">
    <property type="protein sequence ID" value="ACB36181.1"/>
    <property type="molecule type" value="Genomic_DNA"/>
</dbReference>
<dbReference type="RefSeq" id="WP_012348927.1">
    <property type="nucleotide sequence ID" value="NC_010524.1"/>
</dbReference>
<dbReference type="SMR" id="B1Y8B5"/>
<dbReference type="STRING" id="395495.Lcho_3927"/>
<dbReference type="KEGG" id="lch:Lcho_3927"/>
<dbReference type="eggNOG" id="COG0257">
    <property type="taxonomic scope" value="Bacteria"/>
</dbReference>
<dbReference type="HOGENOM" id="CLU_135723_6_2_4"/>
<dbReference type="OrthoDB" id="9802520at2"/>
<dbReference type="Proteomes" id="UP000001693">
    <property type="component" value="Chromosome"/>
</dbReference>
<dbReference type="GO" id="GO:0005737">
    <property type="term" value="C:cytoplasm"/>
    <property type="evidence" value="ECO:0007669"/>
    <property type="project" value="UniProtKB-ARBA"/>
</dbReference>
<dbReference type="GO" id="GO:1990904">
    <property type="term" value="C:ribonucleoprotein complex"/>
    <property type="evidence" value="ECO:0007669"/>
    <property type="project" value="UniProtKB-KW"/>
</dbReference>
<dbReference type="GO" id="GO:0005840">
    <property type="term" value="C:ribosome"/>
    <property type="evidence" value="ECO:0007669"/>
    <property type="project" value="UniProtKB-KW"/>
</dbReference>
<dbReference type="GO" id="GO:0003735">
    <property type="term" value="F:structural constituent of ribosome"/>
    <property type="evidence" value="ECO:0007669"/>
    <property type="project" value="InterPro"/>
</dbReference>
<dbReference type="GO" id="GO:0006412">
    <property type="term" value="P:translation"/>
    <property type="evidence" value="ECO:0007669"/>
    <property type="project" value="UniProtKB-UniRule"/>
</dbReference>
<dbReference type="HAMAP" id="MF_00251">
    <property type="entry name" value="Ribosomal_bL36"/>
    <property type="match status" value="1"/>
</dbReference>
<dbReference type="InterPro" id="IPR000473">
    <property type="entry name" value="Ribosomal_bL36"/>
</dbReference>
<dbReference type="InterPro" id="IPR035977">
    <property type="entry name" value="Ribosomal_bL36_sp"/>
</dbReference>
<dbReference type="NCBIfam" id="TIGR01022">
    <property type="entry name" value="rpmJ_bact"/>
    <property type="match status" value="1"/>
</dbReference>
<dbReference type="PANTHER" id="PTHR42888">
    <property type="entry name" value="50S RIBOSOMAL PROTEIN L36, CHLOROPLASTIC"/>
    <property type="match status" value="1"/>
</dbReference>
<dbReference type="PANTHER" id="PTHR42888:SF1">
    <property type="entry name" value="LARGE RIBOSOMAL SUBUNIT PROTEIN BL36C"/>
    <property type="match status" value="1"/>
</dbReference>
<dbReference type="Pfam" id="PF00444">
    <property type="entry name" value="Ribosomal_L36"/>
    <property type="match status" value="1"/>
</dbReference>
<dbReference type="SUPFAM" id="SSF57840">
    <property type="entry name" value="Ribosomal protein L36"/>
    <property type="match status" value="1"/>
</dbReference>
<dbReference type="PROSITE" id="PS00828">
    <property type="entry name" value="RIBOSOMAL_L36"/>
    <property type="match status" value="1"/>
</dbReference>
<protein>
    <recommendedName>
        <fullName evidence="1">Large ribosomal subunit protein bL36</fullName>
    </recommendedName>
    <alternativeName>
        <fullName evidence="2">50S ribosomal protein L36</fullName>
    </alternativeName>
</protein>
<evidence type="ECO:0000255" key="1">
    <source>
        <dbReference type="HAMAP-Rule" id="MF_00251"/>
    </source>
</evidence>
<evidence type="ECO:0000305" key="2"/>
<gene>
    <name evidence="1" type="primary">rpmJ</name>
    <name type="ordered locus">Lcho_3927</name>
</gene>
<name>RL36_LEPCP</name>
<proteinExistence type="inferred from homology"/>